<proteinExistence type="inferred from homology"/>
<keyword id="KW-0687">Ribonucleoprotein</keyword>
<keyword id="KW-0689">Ribosomal protein</keyword>
<keyword id="KW-0694">RNA-binding</keyword>
<keyword id="KW-0699">rRNA-binding</keyword>
<comment type="function">
    <text evidence="1">Binds directly to 16S ribosomal RNA.</text>
</comment>
<comment type="similarity">
    <text evidence="1">Belongs to the bacterial ribosomal protein bS20 family.</text>
</comment>
<accession>A4W6D9</accession>
<feature type="chain" id="PRO_1000060492" description="Small ribosomal subunit protein bS20">
    <location>
        <begin position="1"/>
        <end position="87"/>
    </location>
</feature>
<feature type="region of interest" description="Disordered" evidence="2">
    <location>
        <begin position="1"/>
        <end position="26"/>
    </location>
</feature>
<organism>
    <name type="scientific">Enterobacter sp. (strain 638)</name>
    <dbReference type="NCBI Taxonomy" id="399742"/>
    <lineage>
        <taxon>Bacteria</taxon>
        <taxon>Pseudomonadati</taxon>
        <taxon>Pseudomonadota</taxon>
        <taxon>Gammaproteobacteria</taxon>
        <taxon>Enterobacterales</taxon>
        <taxon>Enterobacteriaceae</taxon>
        <taxon>Enterobacter</taxon>
    </lineage>
</organism>
<reference key="1">
    <citation type="journal article" date="2010" name="PLoS Genet.">
        <title>Genome sequence of the plant growth promoting endophytic bacterium Enterobacter sp. 638.</title>
        <authorList>
            <person name="Taghavi S."/>
            <person name="van der Lelie D."/>
            <person name="Hoffman A."/>
            <person name="Zhang Y.B."/>
            <person name="Walla M.D."/>
            <person name="Vangronsveld J."/>
            <person name="Newman L."/>
            <person name="Monchy S."/>
        </authorList>
    </citation>
    <scope>NUCLEOTIDE SEQUENCE [LARGE SCALE GENOMIC DNA]</scope>
    <source>
        <strain>638</strain>
    </source>
</reference>
<gene>
    <name evidence="1" type="primary">rpsT</name>
    <name type="ordered locus">Ent638_0582</name>
</gene>
<dbReference type="EMBL" id="CP000653">
    <property type="protein sequence ID" value="ABP59269.1"/>
    <property type="molecule type" value="Genomic_DNA"/>
</dbReference>
<dbReference type="RefSeq" id="WP_012015991.1">
    <property type="nucleotide sequence ID" value="NC_009436.1"/>
</dbReference>
<dbReference type="SMR" id="A4W6D9"/>
<dbReference type="STRING" id="399742.Ent638_0582"/>
<dbReference type="GeneID" id="93307756"/>
<dbReference type="KEGG" id="ent:Ent638_0582"/>
<dbReference type="eggNOG" id="COG0268">
    <property type="taxonomic scope" value="Bacteria"/>
</dbReference>
<dbReference type="HOGENOM" id="CLU_160655_4_0_6"/>
<dbReference type="OrthoDB" id="9807974at2"/>
<dbReference type="Proteomes" id="UP000000230">
    <property type="component" value="Chromosome"/>
</dbReference>
<dbReference type="GO" id="GO:0005829">
    <property type="term" value="C:cytosol"/>
    <property type="evidence" value="ECO:0007669"/>
    <property type="project" value="TreeGrafter"/>
</dbReference>
<dbReference type="GO" id="GO:0015935">
    <property type="term" value="C:small ribosomal subunit"/>
    <property type="evidence" value="ECO:0007669"/>
    <property type="project" value="TreeGrafter"/>
</dbReference>
<dbReference type="GO" id="GO:0070181">
    <property type="term" value="F:small ribosomal subunit rRNA binding"/>
    <property type="evidence" value="ECO:0007669"/>
    <property type="project" value="TreeGrafter"/>
</dbReference>
<dbReference type="GO" id="GO:0003735">
    <property type="term" value="F:structural constituent of ribosome"/>
    <property type="evidence" value="ECO:0007669"/>
    <property type="project" value="InterPro"/>
</dbReference>
<dbReference type="GO" id="GO:0006412">
    <property type="term" value="P:translation"/>
    <property type="evidence" value="ECO:0007669"/>
    <property type="project" value="UniProtKB-UniRule"/>
</dbReference>
<dbReference type="FunFam" id="1.20.58.110:FF:000001">
    <property type="entry name" value="30S ribosomal protein S20"/>
    <property type="match status" value="1"/>
</dbReference>
<dbReference type="Gene3D" id="1.20.58.110">
    <property type="entry name" value="Ribosomal protein S20"/>
    <property type="match status" value="1"/>
</dbReference>
<dbReference type="HAMAP" id="MF_00500">
    <property type="entry name" value="Ribosomal_bS20"/>
    <property type="match status" value="1"/>
</dbReference>
<dbReference type="InterPro" id="IPR002583">
    <property type="entry name" value="Ribosomal_bS20"/>
</dbReference>
<dbReference type="InterPro" id="IPR036510">
    <property type="entry name" value="Ribosomal_bS20_sf"/>
</dbReference>
<dbReference type="NCBIfam" id="TIGR00029">
    <property type="entry name" value="S20"/>
    <property type="match status" value="1"/>
</dbReference>
<dbReference type="PANTHER" id="PTHR33398">
    <property type="entry name" value="30S RIBOSOMAL PROTEIN S20"/>
    <property type="match status" value="1"/>
</dbReference>
<dbReference type="PANTHER" id="PTHR33398:SF1">
    <property type="entry name" value="SMALL RIBOSOMAL SUBUNIT PROTEIN BS20C"/>
    <property type="match status" value="1"/>
</dbReference>
<dbReference type="Pfam" id="PF01649">
    <property type="entry name" value="Ribosomal_S20p"/>
    <property type="match status" value="1"/>
</dbReference>
<dbReference type="SUPFAM" id="SSF46992">
    <property type="entry name" value="Ribosomal protein S20"/>
    <property type="match status" value="1"/>
</dbReference>
<evidence type="ECO:0000255" key="1">
    <source>
        <dbReference type="HAMAP-Rule" id="MF_00500"/>
    </source>
</evidence>
<evidence type="ECO:0000256" key="2">
    <source>
        <dbReference type="SAM" id="MobiDB-lite"/>
    </source>
</evidence>
<evidence type="ECO:0000305" key="3"/>
<name>RS20_ENT38</name>
<protein>
    <recommendedName>
        <fullName evidence="1">Small ribosomal subunit protein bS20</fullName>
    </recommendedName>
    <alternativeName>
        <fullName evidence="3">30S ribosomal protein S20</fullName>
    </alternativeName>
</protein>
<sequence>MANIKSAKKRAVQSEKARKHNASRRSMMRTFIKKVYAAIEAGDKAAAQNAFNEMQPIVDRQAAKGLIHKNKAARHKANLTAQISKLA</sequence>